<proteinExistence type="inferred from homology"/>
<dbReference type="EMBL" id="DQ009484">
    <property type="protein sequence ID" value="AAY81657.1"/>
    <property type="molecule type" value="Viral_cRNA"/>
</dbReference>
<dbReference type="RefSeq" id="YP_443840.1">
    <property type="nucleotide sequence ID" value="NC_007652.1"/>
</dbReference>
<dbReference type="SMR" id="Q2Y2M3"/>
<dbReference type="GlyCosmos" id="Q2Y2M3">
    <property type="glycosylation" value="2 sites, No reported glycans"/>
</dbReference>
<dbReference type="Proteomes" id="UP000002471">
    <property type="component" value="Segment"/>
</dbReference>
<dbReference type="GO" id="GO:0044178">
    <property type="term" value="C:host cell Golgi membrane"/>
    <property type="evidence" value="ECO:0007669"/>
    <property type="project" value="UniProtKB-SubCell"/>
</dbReference>
<dbReference type="GO" id="GO:0020002">
    <property type="term" value="C:host cell plasma membrane"/>
    <property type="evidence" value="ECO:0007669"/>
    <property type="project" value="UniProtKB-SubCell"/>
</dbReference>
<dbReference type="GO" id="GO:0016020">
    <property type="term" value="C:membrane"/>
    <property type="evidence" value="ECO:0007669"/>
    <property type="project" value="UniProtKB-KW"/>
</dbReference>
<dbReference type="GO" id="GO:0019031">
    <property type="term" value="C:viral envelope"/>
    <property type="evidence" value="ECO:0007669"/>
    <property type="project" value="UniProtKB-KW"/>
</dbReference>
<dbReference type="GO" id="GO:0055036">
    <property type="term" value="C:virion membrane"/>
    <property type="evidence" value="ECO:0007669"/>
    <property type="project" value="UniProtKB-SubCell"/>
</dbReference>
<dbReference type="GO" id="GO:0019064">
    <property type="term" value="P:fusion of virus membrane with host plasma membrane"/>
    <property type="evidence" value="ECO:0007669"/>
    <property type="project" value="UniProtKB-KW"/>
</dbReference>
<dbReference type="GO" id="GO:0046718">
    <property type="term" value="P:symbiont entry into host cell"/>
    <property type="evidence" value="ECO:0007669"/>
    <property type="project" value="UniProtKB-KW"/>
</dbReference>
<dbReference type="Gene3D" id="1.10.287.2480">
    <property type="match status" value="2"/>
</dbReference>
<dbReference type="InterPro" id="IPR000776">
    <property type="entry name" value="Fusion_F0_Paramyxovir"/>
</dbReference>
<dbReference type="Pfam" id="PF00523">
    <property type="entry name" value="Fusion_gly"/>
    <property type="match status" value="1"/>
</dbReference>
<dbReference type="SUPFAM" id="SSF58069">
    <property type="entry name" value="Virus ectodomain"/>
    <property type="match status" value="2"/>
</dbReference>
<evidence type="ECO:0000250" key="1"/>
<evidence type="ECO:0000250" key="2">
    <source>
        <dbReference type="UniProtKB" id="P03420"/>
    </source>
</evidence>
<evidence type="ECO:0000250" key="3">
    <source>
        <dbReference type="UniProtKB" id="P11209"/>
    </source>
</evidence>
<evidence type="ECO:0000255" key="4"/>
<evidence type="ECO:0000305" key="5"/>
<gene>
    <name type="primary">F</name>
</gene>
<organism>
    <name type="scientific">Avian metapneumovirus (isolate Canada goose/Minnesota/15a/2001)</name>
    <name type="common">AMPV</name>
    <dbReference type="NCBI Taxonomy" id="652954"/>
    <lineage>
        <taxon>Viruses</taxon>
        <taxon>Riboviria</taxon>
        <taxon>Orthornavirae</taxon>
        <taxon>Negarnaviricota</taxon>
        <taxon>Haploviricotina</taxon>
        <taxon>Monjiviricetes</taxon>
        <taxon>Mononegavirales</taxon>
        <taxon>Pneumoviridae</taxon>
        <taxon>Metapneumovirus</taxon>
        <taxon>Metapneumovirus avis</taxon>
    </lineage>
</organism>
<feature type="signal peptide" evidence="4">
    <location>
        <begin position="1"/>
        <end position="18"/>
    </location>
</feature>
<feature type="chain" id="PRO_0000390366" description="Fusion glycoprotein F0">
    <location>
        <begin position="19"/>
        <end position="537"/>
    </location>
</feature>
<feature type="chain" id="PRO_0000390367" description="Fusion glycoprotein F2">
    <location>
        <begin position="19"/>
        <end position="102"/>
    </location>
</feature>
<feature type="chain" id="PRO_0000390368" description="Fusion glycoprotein F1">
    <location>
        <begin position="103"/>
        <end position="537"/>
    </location>
</feature>
<feature type="topological domain" description="Extracellular" evidence="1">
    <location>
        <begin position="27"/>
        <end position="493"/>
    </location>
</feature>
<feature type="transmembrane region" description="Helical" evidence="4">
    <location>
        <begin position="494"/>
        <end position="514"/>
    </location>
</feature>
<feature type="topological domain" description="Cytoplasmic" evidence="1">
    <location>
        <begin position="515"/>
        <end position="537"/>
    </location>
</feature>
<feature type="region of interest" description="Fusion peptide" evidence="3">
    <location>
        <begin position="103"/>
        <end position="127"/>
    </location>
</feature>
<feature type="region of interest" description="Fusion peptide" evidence="1">
    <location>
        <begin position="103"/>
        <end position="124"/>
    </location>
</feature>
<feature type="coiled-coil region" evidence="4">
    <location>
        <begin position="125"/>
        <end position="153"/>
    </location>
</feature>
<feature type="coiled-coil region" evidence="4">
    <location>
        <begin position="459"/>
        <end position="484"/>
    </location>
</feature>
<feature type="glycosylation site" description="N-linked (GlcNAc...) asparagine; by host" evidence="4">
    <location>
        <position position="57"/>
    </location>
</feature>
<feature type="glycosylation site" description="N-linked (GlcNAc...) asparagine; by host" evidence="4">
    <location>
        <position position="353"/>
    </location>
</feature>
<feature type="disulfide bond" description="Interchain (between F2 and F1 chains)" evidence="2">
    <location>
        <begin position="28"/>
        <end position="407"/>
    </location>
</feature>
<feature type="disulfide bond" description="Interchain (between F2 and F1 chains)" evidence="2">
    <location>
        <begin position="60"/>
        <end position="182"/>
    </location>
</feature>
<feature type="disulfide bond" evidence="2">
    <location>
        <begin position="283"/>
        <end position="311"/>
    </location>
</feature>
<feature type="disulfide bond" evidence="2">
    <location>
        <begin position="292"/>
        <end position="301"/>
    </location>
</feature>
<feature type="disulfide bond" evidence="2">
    <location>
        <begin position="326"/>
        <end position="335"/>
    </location>
</feature>
<feature type="disulfide bond" evidence="2">
    <location>
        <begin position="350"/>
        <end position="361"/>
    </location>
</feature>
<feature type="disulfide bond" evidence="2">
    <location>
        <begin position="384"/>
        <end position="390"/>
    </location>
</feature>
<keyword id="KW-0165">Cleavage on pair of basic residues</keyword>
<keyword id="KW-0175">Coiled coil</keyword>
<keyword id="KW-1015">Disulfide bond</keyword>
<keyword id="KW-1169">Fusion of virus membrane with host cell membrane</keyword>
<keyword id="KW-1168">Fusion of virus membrane with host membrane</keyword>
<keyword id="KW-0325">Glycoprotein</keyword>
<keyword id="KW-1032">Host cell membrane</keyword>
<keyword id="KW-1040">Host Golgi apparatus</keyword>
<keyword id="KW-1043">Host membrane</keyword>
<keyword id="KW-0449">Lipoprotein</keyword>
<keyword id="KW-0472">Membrane</keyword>
<keyword id="KW-0564">Palmitate</keyword>
<keyword id="KW-1185">Reference proteome</keyword>
<keyword id="KW-0732">Signal</keyword>
<keyword id="KW-0812">Transmembrane</keyword>
<keyword id="KW-1133">Transmembrane helix</keyword>
<keyword id="KW-0261">Viral envelope protein</keyword>
<keyword id="KW-1162">Viral penetration into host cytoplasm</keyword>
<keyword id="KW-0946">Virion</keyword>
<keyword id="KW-1160">Virus entry into host cell</keyword>
<protein>
    <recommendedName>
        <fullName>Fusion glycoprotein F0</fullName>
        <shortName>Protein F</shortName>
    </recommendedName>
    <component>
        <recommendedName>
            <fullName>Fusion glycoprotein F2</fullName>
        </recommendedName>
    </component>
    <component>
        <recommendedName>
            <fullName>Fusion glycoprotein F1</fullName>
        </recommendedName>
    </component>
</protein>
<organismHost>
    <name type="scientific">Anser sp.</name>
    <name type="common">goose</name>
    <dbReference type="NCBI Taxonomy" id="8847"/>
</organismHost>
<organismHost>
    <name type="scientific">Meleagris gallopavo</name>
    <name type="common">Wild turkey</name>
    <dbReference type="NCBI Taxonomy" id="9103"/>
</organismHost>
<reference key="1">
    <citation type="journal article" date="2004" name="Avian Dis.">
        <title>Evidence of avian pneumovirus spread beyond Minnesota among wild and domestic birds in central North America.</title>
        <authorList>
            <person name="Bennett R.S."/>
            <person name="Nezworski J."/>
            <person name="Velayudhan B.T."/>
            <person name="Nagaraja K.V."/>
            <person name="Zeman D.H."/>
            <person name="Dyer N."/>
            <person name="Graham T."/>
            <person name="Lauer D.C."/>
            <person name="Njenga M.K."/>
            <person name="Halvorson D.A."/>
        </authorList>
    </citation>
    <scope>NUCLEOTIDE SEQUENCE [GENOMIC RNA]</scope>
</reference>
<reference key="2">
    <citation type="journal article" date="2005" name="J. Virol.">
        <title>A wild goose metapneumovirus containing a large attachment glycoprotein is avirulent but immunoprotective in domestic turkeys.</title>
        <authorList>
            <person name="Bennett R.S."/>
            <person name="LaRue R."/>
            <person name="Shaw D."/>
            <person name="Yu Q."/>
            <person name="Nagaraja K.V."/>
            <person name="Halvorson D.A."/>
            <person name="Njenga M.K."/>
        </authorList>
    </citation>
    <scope>NUCLEOTIDE SEQUENCE [GENOMIC RNA]</scope>
</reference>
<comment type="function">
    <molecule>Fusion glycoprotein F0</molecule>
    <text evidence="2">Inactive precursor that is cleaved to give rise to the mature F1 and F2 fusion glycoproteins.</text>
</comment>
<comment type="function">
    <molecule>Fusion glycoprotein F1</molecule>
    <text evidence="2">Class I viral fusion protein. Under the current model, the protein has at least 3 conformational states: pre-fusion native state, pre-hairpin intermediate state, and post-fusion hairpin state. During viral and plasma cell membrane fusion, the coiled coil regions assume a trimer-of-hairpins structure, positioning the fusion peptide in close proximity to the C-terminal region of the ectodomain. The formation of this structure appears to drive apposition and subsequent fusion of viral and cellular membranes leading to delivery of the nucleocapsid into the cytoplasm. This fusion is pH independent and occurs at the plasma or endosomal membrane. The trimer of F1-F2 (F protein) also facilitates the attachment to host cell by binding to host heparan sulfate.</text>
</comment>
<comment type="function">
    <molecule>Fusion glycoprotein F2</molecule>
    <text evidence="2">Major determinant of the species specificity of RSV infection. The trimer of F1-F2 (F protein) also facilitates the attachment to host cell by binding to host heparan sulfate.</text>
</comment>
<comment type="subunit">
    <molecule>Fusion glycoprotein F1</molecule>
    <text evidence="2">Homotrimer. Heterodimer with fusion protein F2; disulfide-linked. As a heterodimer with F2, interacts with host heparan sulfate. Part of a complex composed of F1, F2 and G glycoproteins.</text>
</comment>
<comment type="subunit">
    <molecule>Fusion glycoprotein F2</molecule>
    <text evidence="2">Homotrimer. Heterodimer with fusion protein F1; disulfide-linked. As a heterodimer with F1, interacts with host heparan sulfate. Part of a complex composed of F1, F2 and G glycoproteins.</text>
</comment>
<comment type="subcellular location">
    <molecule>Fusion glycoprotein F0</molecule>
    <subcellularLocation>
        <location evidence="2">Host Golgi apparatus membrane</location>
        <topology evidence="2">Single-pass membrane protein</topology>
    </subcellularLocation>
</comment>
<comment type="subcellular location">
    <molecule>Fusion glycoprotein F1</molecule>
    <subcellularLocation>
        <location evidence="2">Virion membrane</location>
        <topology evidence="2">Single-pass type I membrane protein</topology>
    </subcellularLocation>
    <subcellularLocation>
        <location evidence="2">Host cell membrane</location>
        <topology evidence="2">Single-pass membrane protein</topology>
    </subcellularLocation>
    <text evidence="2">Localized at the host apical membrane.</text>
</comment>
<comment type="subcellular location">
    <molecule>Fusion glycoprotein F2</molecule>
    <subcellularLocation>
        <location evidence="2">Virion membrane</location>
    </subcellularLocation>
    <subcellularLocation>
        <location evidence="2">Host cell membrane</location>
    </subcellularLocation>
    <text evidence="2">Localized at the host apical membrane.</text>
</comment>
<comment type="domain">
    <molecule>Fusion glycoprotein F0</molecule>
    <text evidence="2 3">The N-terminus is a hydrophobic fusion peptide that inserts into the target host membrane (By similarity). It is buried in the center of the trimer cavity before cleavage. The coiled coil (heptad repeat) regions are probably involved in homotrimerization, heterodimerization and in the formation of a fusion-active hairpin structure (By similarity).</text>
</comment>
<comment type="domain">
    <molecule>Fusion glycoprotein F1</molecule>
    <text evidence="2 3">The N-terminus is a hydrophobic fusion peptide that inserts into the target host membrane (By similarity). It is buried in the center of the trimer cavity before cleavage. The coiled coil (heptad repeat) regions are probably involved in homotrimerization, heterodimerization and in the formation of a fusion-active hairpin structure (By similarity).</text>
</comment>
<comment type="PTM">
    <molecule>Fusion glycoprotein F0</molecule>
    <text evidence="2">The F glycoprotein is synthesized as a F0 inactive precursor that is heavily N-glycosylated and processed.</text>
</comment>
<comment type="similarity">
    <text evidence="5">Belongs to the paramyxoviruses fusion glycoprotein family.</text>
</comment>
<accession>Q2Y2M3</accession>
<sequence length="537" mass="58076">MSWKVVLLLVLLATPTGGLEESYLEESCSTVTRGYLSVLRTGWYTNVFTLEVGDVENLTCTDGPSLIRTELELTKNALEELKTVSADQLAKEARIMSPRKARFVLGAIALGVATAAAVTAGVAIAKTIRLEGEVAAIKGALRKTNEAVSTLGNGVRVLATAVNDLKDFISKKLTPAINKNKCDISDLKMAVSFGQYNRRFLNVVRQFSDNAGITPAISLDLMTDAELVRAVSNMPTSSGQINLMLENRAMVRRKGFGILIGVYGSSVVYMVQLPIFGVIDTPCWKVKAAPLCSGKDGSYACLLREDQGWYCQNAGSTVYYPNEEDCEVRSDHVFCDTAAGINVAKESEECNRNISTTKYPCKVSTGRHPISMVALSPLGALVACYDGVSCSIGSNKVGIIRPLGKGCSYISNQDADTVTIDNPVYQLSKVEGEQHTIKGKPVSSNFDPIEFPEDQFNIALDQVFESVEKSKNLIDQSNKILDSTEKGNAGFVMVIVLIVLLMLAAVGVGIFFVVKKRKAAPKFPMEMNGVNNKGFIP</sequence>
<name>FUS_AMPV1</name>